<keyword id="KW-0130">Cell adhesion</keyword>
<keyword id="KW-0272">Extracellular matrix</keyword>
<keyword id="KW-0325">Glycoprotein</keyword>
<keyword id="KW-0677">Repeat</keyword>
<keyword id="KW-0964">Secreted</keyword>
<organism>
    <name type="scientific">Lytechinus variegatus</name>
    <name type="common">Green sea urchin</name>
    <name type="synonym">Echinus variegatus</name>
    <dbReference type="NCBI Taxonomy" id="7654"/>
    <lineage>
        <taxon>Eukaryota</taxon>
        <taxon>Metazoa</taxon>
        <taxon>Echinodermata</taxon>
        <taxon>Eleutherozoa</taxon>
        <taxon>Echinozoa</taxon>
        <taxon>Echinoidea</taxon>
        <taxon>Euechinoidea</taxon>
        <taxon>Echinacea</taxon>
        <taxon>Temnopleuroida</taxon>
        <taxon>Toxopneustidae</taxon>
        <taxon>Lytechinus</taxon>
    </lineage>
</organism>
<feature type="chain" id="PRO_0000084098" description="Hyalin">
    <location>
        <begin position="1" status="less than"/>
        <end position="530" status="greater than"/>
    </location>
</feature>
<feature type="domain" description="HYR 1" evidence="1">
    <location>
        <begin position="1" status="less than"/>
        <end position="66"/>
    </location>
</feature>
<feature type="domain" description="HYR 2" evidence="1">
    <location>
        <begin position="67"/>
        <end position="150"/>
    </location>
</feature>
<feature type="domain" description="HYR 3" evidence="1">
    <location>
        <begin position="151"/>
        <end position="234"/>
    </location>
</feature>
<feature type="domain" description="HYR 4" evidence="1">
    <location>
        <begin position="235"/>
        <end position="319"/>
    </location>
</feature>
<feature type="domain" description="HYR 5" evidence="1">
    <location>
        <begin position="320"/>
        <end position="403"/>
    </location>
</feature>
<feature type="domain" description="HYR 6" evidence="1">
    <location>
        <begin position="404"/>
        <end position="486"/>
    </location>
</feature>
<feature type="domain" description="HYR 7" evidence="1">
    <location>
        <begin position="487"/>
        <end position="530" status="greater than"/>
    </location>
</feature>
<feature type="non-terminal residue">
    <location>
        <position position="1"/>
    </location>
</feature>
<feature type="non-terminal residue">
    <location>
        <position position="530"/>
    </location>
</feature>
<sequence>NVEIGTPSTTVTWTVPTAIDASAVTTVSSHNPGQSFITGTTTTVVYTATDEFGNIGQCAFTITVTATDSIDPVVTVSSGFITQQVEIGLGGVNVFYTEPTATDNSGTAVLFSRSAQPGDFFPVGQTVVTYIFQDPSGNFGTGTFTVNVVEVDTTPPVVTVPNGIITRQVEIGTSGIIVFFSEPTATDNSGTAILDSRTHQPGDVFPVGQTIVTYTFRDPAGNPATGTFTINVVEVDTTPPVITVPTPSIITRQVEVGTPGVSVFYQEPTATDNSGTAILVSRTNQPGDVFPVGQTVVTYTFQDPSGNPASATVTINVVEVDTTPPVISVPSTFITRTVELGTPGVNVFYPEPTASDNSGTAILVTRTNQPGDFFSVGQTVVTYTFQDPTGNPATATVTINIVEEDTTPPTVNCINDVIRTVELGTTSAQVFYSEPTASDVGQATLISRTAQPGDSFPVGATVVTYIFGDNAGNIADPCVFTITVNTVDTTPPTVNCVSDVVRVVELGTTSLAVVYTEPTATDISGTASLV</sequence>
<accession>O96530</accession>
<comment type="function">
    <text>Major constituent of the hyaline layer. The hyaline layer of echinoderm embryos is an extraembryonic matrix that functions as a substrate for cell adhesion through early development.</text>
</comment>
<comment type="subunit">
    <text>Homooligomer in presence of calcium.</text>
</comment>
<comment type="subcellular location">
    <subcellularLocation>
        <location>Secreted</location>
        <location>Extracellular space</location>
        <location>Extracellular matrix</location>
    </subcellularLocation>
</comment>
<comment type="PTM">
    <text>Glycosylated.</text>
</comment>
<dbReference type="EMBL" id="AF076250">
    <property type="protein sequence ID" value="AAC72757.1"/>
    <property type="molecule type" value="mRNA"/>
</dbReference>
<dbReference type="OrthoDB" id="4405280at2759"/>
<dbReference type="GO" id="GO:0005576">
    <property type="term" value="C:extracellular region"/>
    <property type="evidence" value="ECO:0007669"/>
    <property type="project" value="UniProtKB-KW"/>
</dbReference>
<dbReference type="GO" id="GO:0007155">
    <property type="term" value="P:cell adhesion"/>
    <property type="evidence" value="ECO:0007669"/>
    <property type="project" value="UniProtKB-KW"/>
</dbReference>
<dbReference type="Gene3D" id="2.60.40.10">
    <property type="entry name" value="Immunoglobulins"/>
    <property type="match status" value="2"/>
</dbReference>
<dbReference type="InterPro" id="IPR003410">
    <property type="entry name" value="HYR_dom"/>
</dbReference>
<dbReference type="InterPro" id="IPR013783">
    <property type="entry name" value="Ig-like_fold"/>
</dbReference>
<dbReference type="PANTHER" id="PTHR24273">
    <property type="entry name" value="FI04643P-RELATED"/>
    <property type="match status" value="1"/>
</dbReference>
<dbReference type="PANTHER" id="PTHR24273:SF32">
    <property type="entry name" value="HYALIN"/>
    <property type="match status" value="1"/>
</dbReference>
<dbReference type="Pfam" id="PF02494">
    <property type="entry name" value="HYR"/>
    <property type="match status" value="7"/>
</dbReference>
<dbReference type="PROSITE" id="PS50825">
    <property type="entry name" value="HYR"/>
    <property type="match status" value="7"/>
</dbReference>
<name>HYAL_LYTVA</name>
<reference key="1">
    <citation type="journal article" date="1998" name="Dev. Biol.">
        <title>A molecular analysis of hyalin -- a substrate for cell adhesion in the hyaline layer of the sea urchin embryo.</title>
        <authorList>
            <person name="Wessel G.M."/>
            <person name="Berg L."/>
            <person name="Adelson D.L."/>
            <person name="Cannon G."/>
            <person name="McClay D.R."/>
        </authorList>
    </citation>
    <scope>NUCLEOTIDE SEQUENCE [MRNA]</scope>
</reference>
<proteinExistence type="evidence at transcript level"/>
<evidence type="ECO:0000255" key="1">
    <source>
        <dbReference type="PROSITE-ProRule" id="PRU00113"/>
    </source>
</evidence>
<protein>
    <recommendedName>
        <fullName>Hyalin</fullName>
    </recommendedName>
</protein>